<proteinExistence type="inferred from homology"/>
<protein>
    <recommendedName>
        <fullName evidence="1">Protein RecA</fullName>
    </recommendedName>
    <alternativeName>
        <fullName evidence="1">Recombinase A</fullName>
    </alternativeName>
</protein>
<dbReference type="EMBL" id="CP000447">
    <property type="protein sequence ID" value="ABI70915.1"/>
    <property type="molecule type" value="Genomic_DNA"/>
</dbReference>
<dbReference type="RefSeq" id="WP_011636536.1">
    <property type="nucleotide sequence ID" value="NC_008345.1"/>
</dbReference>
<dbReference type="SMR" id="Q086A0"/>
<dbReference type="STRING" id="318167.Sfri_1062"/>
<dbReference type="KEGG" id="sfr:Sfri_1062"/>
<dbReference type="eggNOG" id="COG0468">
    <property type="taxonomic scope" value="Bacteria"/>
</dbReference>
<dbReference type="HOGENOM" id="CLU_040469_3_2_6"/>
<dbReference type="OrthoDB" id="9776733at2"/>
<dbReference type="Proteomes" id="UP000000684">
    <property type="component" value="Chromosome"/>
</dbReference>
<dbReference type="GO" id="GO:0005829">
    <property type="term" value="C:cytosol"/>
    <property type="evidence" value="ECO:0007669"/>
    <property type="project" value="TreeGrafter"/>
</dbReference>
<dbReference type="GO" id="GO:0005524">
    <property type="term" value="F:ATP binding"/>
    <property type="evidence" value="ECO:0007669"/>
    <property type="project" value="UniProtKB-UniRule"/>
</dbReference>
<dbReference type="GO" id="GO:0016887">
    <property type="term" value="F:ATP hydrolysis activity"/>
    <property type="evidence" value="ECO:0007669"/>
    <property type="project" value="InterPro"/>
</dbReference>
<dbReference type="GO" id="GO:0140664">
    <property type="term" value="F:ATP-dependent DNA damage sensor activity"/>
    <property type="evidence" value="ECO:0007669"/>
    <property type="project" value="InterPro"/>
</dbReference>
<dbReference type="GO" id="GO:0003684">
    <property type="term" value="F:damaged DNA binding"/>
    <property type="evidence" value="ECO:0007669"/>
    <property type="project" value="UniProtKB-UniRule"/>
</dbReference>
<dbReference type="GO" id="GO:0003697">
    <property type="term" value="F:single-stranded DNA binding"/>
    <property type="evidence" value="ECO:0007669"/>
    <property type="project" value="UniProtKB-UniRule"/>
</dbReference>
<dbReference type="GO" id="GO:0006310">
    <property type="term" value="P:DNA recombination"/>
    <property type="evidence" value="ECO:0007669"/>
    <property type="project" value="UniProtKB-UniRule"/>
</dbReference>
<dbReference type="GO" id="GO:0006281">
    <property type="term" value="P:DNA repair"/>
    <property type="evidence" value="ECO:0007669"/>
    <property type="project" value="UniProtKB-UniRule"/>
</dbReference>
<dbReference type="GO" id="GO:0009432">
    <property type="term" value="P:SOS response"/>
    <property type="evidence" value="ECO:0007669"/>
    <property type="project" value="UniProtKB-UniRule"/>
</dbReference>
<dbReference type="CDD" id="cd00983">
    <property type="entry name" value="RecA"/>
    <property type="match status" value="1"/>
</dbReference>
<dbReference type="FunFam" id="3.40.50.300:FF:000087">
    <property type="entry name" value="Recombinase RecA"/>
    <property type="match status" value="1"/>
</dbReference>
<dbReference type="Gene3D" id="3.40.50.300">
    <property type="entry name" value="P-loop containing nucleotide triphosphate hydrolases"/>
    <property type="match status" value="1"/>
</dbReference>
<dbReference type="HAMAP" id="MF_00268">
    <property type="entry name" value="RecA"/>
    <property type="match status" value="1"/>
</dbReference>
<dbReference type="InterPro" id="IPR003593">
    <property type="entry name" value="AAA+_ATPase"/>
</dbReference>
<dbReference type="InterPro" id="IPR013765">
    <property type="entry name" value="DNA_recomb/repair_RecA"/>
</dbReference>
<dbReference type="InterPro" id="IPR020584">
    <property type="entry name" value="DNA_recomb/repair_RecA_CS"/>
</dbReference>
<dbReference type="InterPro" id="IPR027417">
    <property type="entry name" value="P-loop_NTPase"/>
</dbReference>
<dbReference type="InterPro" id="IPR049261">
    <property type="entry name" value="RecA-like_C"/>
</dbReference>
<dbReference type="InterPro" id="IPR049428">
    <property type="entry name" value="RecA-like_N"/>
</dbReference>
<dbReference type="InterPro" id="IPR020588">
    <property type="entry name" value="RecA_ATP-bd"/>
</dbReference>
<dbReference type="InterPro" id="IPR023400">
    <property type="entry name" value="RecA_C_sf"/>
</dbReference>
<dbReference type="InterPro" id="IPR020587">
    <property type="entry name" value="RecA_monomer-monomer_interface"/>
</dbReference>
<dbReference type="NCBIfam" id="TIGR02012">
    <property type="entry name" value="tigrfam_recA"/>
    <property type="match status" value="1"/>
</dbReference>
<dbReference type="PANTHER" id="PTHR45900:SF1">
    <property type="entry name" value="MITOCHONDRIAL DNA REPAIR PROTEIN RECA HOMOLOG-RELATED"/>
    <property type="match status" value="1"/>
</dbReference>
<dbReference type="PANTHER" id="PTHR45900">
    <property type="entry name" value="RECA"/>
    <property type="match status" value="1"/>
</dbReference>
<dbReference type="Pfam" id="PF00154">
    <property type="entry name" value="RecA"/>
    <property type="match status" value="1"/>
</dbReference>
<dbReference type="Pfam" id="PF21096">
    <property type="entry name" value="RecA_C"/>
    <property type="match status" value="1"/>
</dbReference>
<dbReference type="PRINTS" id="PR00142">
    <property type="entry name" value="RECA"/>
</dbReference>
<dbReference type="SMART" id="SM00382">
    <property type="entry name" value="AAA"/>
    <property type="match status" value="1"/>
</dbReference>
<dbReference type="SUPFAM" id="SSF52540">
    <property type="entry name" value="P-loop containing nucleoside triphosphate hydrolases"/>
    <property type="match status" value="1"/>
</dbReference>
<dbReference type="SUPFAM" id="SSF54752">
    <property type="entry name" value="RecA protein, C-terminal domain"/>
    <property type="match status" value="1"/>
</dbReference>
<dbReference type="PROSITE" id="PS00321">
    <property type="entry name" value="RECA_1"/>
    <property type="match status" value="1"/>
</dbReference>
<dbReference type="PROSITE" id="PS50162">
    <property type="entry name" value="RECA_2"/>
    <property type="match status" value="1"/>
</dbReference>
<dbReference type="PROSITE" id="PS50163">
    <property type="entry name" value="RECA_3"/>
    <property type="match status" value="1"/>
</dbReference>
<name>RECA_SHEFN</name>
<reference key="1">
    <citation type="submission" date="2006-08" db="EMBL/GenBank/DDBJ databases">
        <title>Complete sequence of Shewanella frigidimarina NCIMB 400.</title>
        <authorList>
            <consortium name="US DOE Joint Genome Institute"/>
            <person name="Copeland A."/>
            <person name="Lucas S."/>
            <person name="Lapidus A."/>
            <person name="Barry K."/>
            <person name="Detter J.C."/>
            <person name="Glavina del Rio T."/>
            <person name="Hammon N."/>
            <person name="Israni S."/>
            <person name="Dalin E."/>
            <person name="Tice H."/>
            <person name="Pitluck S."/>
            <person name="Fredrickson J.K."/>
            <person name="Kolker E."/>
            <person name="McCuel L.A."/>
            <person name="DiChristina T."/>
            <person name="Nealson K.H."/>
            <person name="Newman D."/>
            <person name="Tiedje J.M."/>
            <person name="Zhou J."/>
            <person name="Romine M.F."/>
            <person name="Culley D.E."/>
            <person name="Serres M."/>
            <person name="Chertkov O."/>
            <person name="Brettin T."/>
            <person name="Bruce D."/>
            <person name="Han C."/>
            <person name="Tapia R."/>
            <person name="Gilna P."/>
            <person name="Schmutz J."/>
            <person name="Larimer F."/>
            <person name="Land M."/>
            <person name="Hauser L."/>
            <person name="Kyrpides N."/>
            <person name="Mikhailova N."/>
            <person name="Richardson P."/>
        </authorList>
    </citation>
    <scope>NUCLEOTIDE SEQUENCE [LARGE SCALE GENOMIC DNA]</scope>
    <source>
        <strain>NCIMB 400</strain>
    </source>
</reference>
<accession>Q086A0</accession>
<keyword id="KW-0067">ATP-binding</keyword>
<keyword id="KW-0963">Cytoplasm</keyword>
<keyword id="KW-0227">DNA damage</keyword>
<keyword id="KW-0233">DNA recombination</keyword>
<keyword id="KW-0234">DNA repair</keyword>
<keyword id="KW-0238">DNA-binding</keyword>
<keyword id="KW-0547">Nucleotide-binding</keyword>
<keyword id="KW-1185">Reference proteome</keyword>
<keyword id="KW-0742">SOS response</keyword>
<organism>
    <name type="scientific">Shewanella frigidimarina (strain NCIMB 400)</name>
    <dbReference type="NCBI Taxonomy" id="318167"/>
    <lineage>
        <taxon>Bacteria</taxon>
        <taxon>Pseudomonadati</taxon>
        <taxon>Pseudomonadota</taxon>
        <taxon>Gammaproteobacteria</taxon>
        <taxon>Alteromonadales</taxon>
        <taxon>Shewanellaceae</taxon>
        <taxon>Shewanella</taxon>
    </lineage>
</organism>
<sequence length="354" mass="37767">MKVDPNKEKALAAVLSQIEKQFGKGSIMKLGEDRTMDVETISTGSLSLDIALGAGGLPMGRIVEIYGPESSGKTTLTLEVIAAAQREGKTCAFIDAEHALDPIYAKKLGVDIDNLLCSQPDTGEQALEICDALTRSGAVDVIVVDSVAALTPKAEIEGEIGDSHMGLAARMMSQAMRKLAGNLKQSNTLLIFINQIRMKIGVMFGSPETTTGGNALKFYASVRLDIRRTGAIKDGDEVVGNETRVKVVKNKIAAPFKQAEFQILYGQGINRTGELVDLGVAHKLVDKAGAWYSYKGEKIGQGRANAGKFLTENPVIASEINTTLRAMLLNGGANSSDSKTESDENIDLETGEVF</sequence>
<comment type="function">
    <text evidence="1">Can catalyze the hydrolysis of ATP in the presence of single-stranded DNA, the ATP-dependent uptake of single-stranded DNA by duplex DNA, and the ATP-dependent hybridization of homologous single-stranded DNAs. It interacts with LexA causing its activation and leading to its autocatalytic cleavage.</text>
</comment>
<comment type="subcellular location">
    <subcellularLocation>
        <location evidence="1">Cytoplasm</location>
    </subcellularLocation>
</comment>
<comment type="similarity">
    <text evidence="1">Belongs to the RecA family.</text>
</comment>
<evidence type="ECO:0000255" key="1">
    <source>
        <dbReference type="HAMAP-Rule" id="MF_00268"/>
    </source>
</evidence>
<evidence type="ECO:0000256" key="2">
    <source>
        <dbReference type="SAM" id="MobiDB-lite"/>
    </source>
</evidence>
<gene>
    <name evidence="1" type="primary">recA</name>
    <name type="ordered locus">Sfri_1062</name>
</gene>
<feature type="chain" id="PRO_1000047994" description="Protein RecA">
    <location>
        <begin position="1"/>
        <end position="354"/>
    </location>
</feature>
<feature type="region of interest" description="Disordered" evidence="2">
    <location>
        <begin position="331"/>
        <end position="354"/>
    </location>
</feature>
<feature type="compositionally biased region" description="Acidic residues" evidence="2">
    <location>
        <begin position="343"/>
        <end position="354"/>
    </location>
</feature>
<feature type="binding site" evidence="1">
    <location>
        <begin position="67"/>
        <end position="74"/>
    </location>
    <ligand>
        <name>ATP</name>
        <dbReference type="ChEBI" id="CHEBI:30616"/>
    </ligand>
</feature>